<organism>
    <name type="scientific">Streptomyces hygroscopicus</name>
    <dbReference type="NCBI Taxonomy" id="1912"/>
    <lineage>
        <taxon>Bacteria</taxon>
        <taxon>Bacillati</taxon>
        <taxon>Actinomycetota</taxon>
        <taxon>Actinomycetes</taxon>
        <taxon>Kitasatosporales</taxon>
        <taxon>Streptomycetaceae</taxon>
        <taxon>Streptomyces</taxon>
        <taxon>Streptomyces violaceusniger group</taxon>
    </lineage>
</organism>
<comment type="function">
    <text evidence="2 3">Involved in the biosynthesis of phosphinothricin tripeptide (PTT), also known as bialaphos (BA), a natural-product antibiotic and potent herbicide. Catalyzes the condensation berween phosphinopyruvic acid (PPA), an analog of oxalacetic acid, and acetyl-CoA to form R-2-phosphinomethylmalic acid (PMM) (PubMed:3170341, PubMed:3781934). Can also act on oxaloacetate, but shows no activity when acetyl-CoA is substituted by propionyl-CoA or butyryl-CoA (PubMed:3170341).</text>
</comment>
<comment type="catalytic activity">
    <reaction evidence="2 3">
        <text>3-(hydrohydroxyphosphoryl)pyruvate + acetyl-CoA + H2O = phosphinomethylmalate + CoA + H(+)</text>
        <dbReference type="Rhea" id="RHEA:26068"/>
        <dbReference type="ChEBI" id="CHEBI:15377"/>
        <dbReference type="ChEBI" id="CHEBI:15378"/>
        <dbReference type="ChEBI" id="CHEBI:57287"/>
        <dbReference type="ChEBI" id="CHEBI:57288"/>
        <dbReference type="ChEBI" id="CHEBI:58348"/>
        <dbReference type="ChEBI" id="CHEBI:91181"/>
        <dbReference type="EC" id="2.3.3.18"/>
    </reaction>
</comment>
<comment type="cofactor">
    <cofactor evidence="2">
        <name>Mn(2+)</name>
        <dbReference type="ChEBI" id="CHEBI:29035"/>
    </cofactor>
    <cofactor evidence="2">
        <name>Co(2+)</name>
        <dbReference type="ChEBI" id="CHEBI:48828"/>
    </cofactor>
    <text evidence="2">Can also use magnesium, calcium and iron ions with lower efficiency.</text>
</comment>
<comment type="activity regulation">
    <text evidence="2">Strongly inhibited by p-chloromercuribenzoate (pCMB), iodoacetamide (IA) and EDTA.</text>
</comment>
<comment type="biophysicochemical properties">
    <kinetics>
        <KM evidence="2">50 uM for acetyl-CoA</KM>
        <KM evidence="2">130 uM for oxaloacetate</KM>
        <KM evidence="2">390 uM for phosphinopyruvic acid (PPA)</KM>
    </kinetics>
    <phDependence>
        <text evidence="2">Optimum pH is 8.</text>
    </phDependence>
    <temperatureDependence>
        <text evidence="2">Optimum temperature is 30 degrees Celsius.</text>
    </temperatureDependence>
</comment>
<comment type="pathway">
    <text evidence="7 8">Secondary metabolite biosynthesis; bialaphos biosynthesis.</text>
</comment>
<comment type="subunit">
    <text evidence="2">Homodimer.</text>
</comment>
<comment type="similarity">
    <text evidence="6">Belongs to the alpha-IPM synthase/homocitrate synthase family.</text>
</comment>
<gene>
    <name evidence="4" type="primary">Pmms</name>
</gene>
<proteinExistence type="evidence at protein level"/>
<name>PMMS_STRHY</name>
<evidence type="ECO:0000255" key="1">
    <source>
        <dbReference type="PROSITE-ProRule" id="PRU01151"/>
    </source>
</evidence>
<evidence type="ECO:0000269" key="2">
    <source>
    </source>
</evidence>
<evidence type="ECO:0000269" key="3">
    <source>
    </source>
</evidence>
<evidence type="ECO:0000303" key="4">
    <source>
    </source>
</evidence>
<evidence type="ECO:0000303" key="5">
    <source>
    </source>
</evidence>
<evidence type="ECO:0000305" key="6"/>
<evidence type="ECO:0000305" key="7">
    <source>
    </source>
</evidence>
<evidence type="ECO:0000305" key="8">
    <source>
    </source>
</evidence>
<evidence type="ECO:0000312" key="9">
    <source>
        <dbReference type="EMBL" id="AKN91125.1"/>
    </source>
</evidence>
<evidence type="ECO:0000312" key="10">
    <source>
        <dbReference type="EMBL" id="BAA90528.1"/>
    </source>
</evidence>
<reference key="1">
    <citation type="journal article" date="1990" name="Agric. Biol. Chem.">
        <title>Purification and characterization of citrate synthase from Streptomyces hygroscopicus SF-1293 and comparison of its properties with those of 2-phosphinomethylmalic acid synthase.</title>
        <authorList>
            <person name="Shimotohno K.W."/>
            <person name="Imai S."/>
            <person name="Murakami T."/>
            <person name="Seto H."/>
        </authorList>
    </citation>
    <scope>NUCLEOTIDE SEQUENCE [GENOMIC DNA]</scope>
    <source>
        <strain evidence="10">ATCC 21705 / DSM 41527 / SF-1293</strain>
    </source>
</reference>
<reference key="2">
    <citation type="submission" date="1999-07" db="EMBL/GenBank/DDBJ databases">
        <title>Nucleotide sequence of 2-phosphinomethylmalic acid synthase of bialaphos producing Streptomyces hygroscopicus.</title>
        <authorList>
            <person name="Hidaka T."/>
            <person name="Shimotohno K.W."/>
            <person name="Morishita T."/>
            <person name="Seto H."/>
        </authorList>
    </citation>
    <scope>NUCLEOTIDE SEQUENCE [GENOMIC DNA]</scope>
    <source>
        <strain evidence="10">ATCC 21705 / DSM 41527 / SF-1293</strain>
    </source>
</reference>
<reference key="3">
    <citation type="journal article" date="2016" name="J. Antibiot.">
        <title>Conserved biosynthetic pathways for phosalacine, bialaphos and newly discovered phosphonic acid natural products.</title>
        <authorList>
            <person name="Blodgett J.A."/>
            <person name="Zhang J.K."/>
            <person name="Yu X."/>
            <person name="Metcalf W.W."/>
        </authorList>
    </citation>
    <scope>NUCLEOTIDE SEQUENCE [GENOMIC DNA]</scope>
    <source>
        <strain evidence="9">ATCC 21705 / DSM 41527 / SF-1293</strain>
    </source>
</reference>
<reference key="4">
    <citation type="journal article" date="1986" name="J. Antibiot.">
        <title>Studies on the biosynthesis of bialaphos (SE-1293). 7. The absolute configuration of 2-phosphinomethylmalic acid, a biosynthetic intermediate of bialaphos.</title>
        <authorList>
            <person name="Shimotohno K."/>
            <person name="Seto H."/>
            <person name="Otake N."/>
            <person name="Imai S."/>
            <person name="Satoh A."/>
        </authorList>
    </citation>
    <scope>FUNCTION</scope>
    <scope>CATALYTIC ACTIVITY</scope>
</reference>
<reference key="5">
    <citation type="journal article" date="1988" name="J. Antibiot.">
        <title>Studies on the biosynthesis of bialaphos (SF-1293). 8. Purification and characterization of 2-phosphinomethylmalic acid synthase from Streptomyces hygroscopicus SF-1293.</title>
        <authorList>
            <person name="Shimotohno K.W."/>
            <person name="Seto H."/>
            <person name="Otake N."/>
            <person name="Imai S."/>
            <person name="Murakami T."/>
        </authorList>
    </citation>
    <scope>FUNCTION</scope>
    <scope>CATALYTIC ACTIVITY</scope>
    <scope>BIOPHYSICOCHEMICAL PROPERTIES</scope>
    <scope>ACTIVITY REGULATION</scope>
    <scope>COFACTOR</scope>
    <scope>SUBSTRATE SPECIFICITY</scope>
    <scope>SUBUNIT</scope>
    <source>
        <strain>ATCC 21705 / DSM 41527 / SF-1293</strain>
    </source>
</reference>
<keyword id="KW-0045">Antibiotic biosynthesis</keyword>
<keyword id="KW-0170">Cobalt</keyword>
<keyword id="KW-0464">Manganese</keyword>
<keyword id="KW-0808">Transferase</keyword>
<feature type="chain" id="PRO_0000443948" description="2-phosphinomethylmalate synthase">
    <location>
        <begin position="1"/>
        <end position="440"/>
    </location>
</feature>
<feature type="domain" description="Pyruvate carboxyltransferase" evidence="1">
    <location>
        <begin position="39"/>
        <end position="313"/>
    </location>
</feature>
<feature type="sequence conflict" description="In Ref. 3; AKN91125." evidence="6" ref="3">
    <original>G</original>
    <variation>D</variation>
    <location>
        <position position="73"/>
    </location>
</feature>
<dbReference type="EC" id="2.3.3.18" evidence="2 3"/>
<dbReference type="EMBL" id="AB029822">
    <property type="protein sequence ID" value="BAA90528.1"/>
    <property type="molecule type" value="Genomic_DNA"/>
</dbReference>
<dbReference type="EMBL" id="KP026916">
    <property type="protein sequence ID" value="AKN91125.1"/>
    <property type="molecule type" value="Genomic_DNA"/>
</dbReference>
<dbReference type="PIR" id="PS0106">
    <property type="entry name" value="PS0106"/>
</dbReference>
<dbReference type="SMR" id="Q9LCB4"/>
<dbReference type="KEGG" id="ag:BAA90528"/>
<dbReference type="BioCyc" id="MetaCyc:MONOMER-15047"/>
<dbReference type="BRENDA" id="2.3.3.18">
    <property type="organism ID" value="6043"/>
</dbReference>
<dbReference type="BRENDA" id="2.3.3.19">
    <property type="organism ID" value="6043"/>
</dbReference>
<dbReference type="UniPathway" id="UPA00197"/>
<dbReference type="GO" id="GO:0016740">
    <property type="term" value="F:transferase activity"/>
    <property type="evidence" value="ECO:0007669"/>
    <property type="project" value="UniProtKB-KW"/>
</dbReference>
<dbReference type="GO" id="GO:0017000">
    <property type="term" value="P:antibiotic biosynthetic process"/>
    <property type="evidence" value="ECO:0007669"/>
    <property type="project" value="UniProtKB-KW"/>
</dbReference>
<dbReference type="Gene3D" id="3.20.20.70">
    <property type="entry name" value="Aldolase class I"/>
    <property type="match status" value="1"/>
</dbReference>
<dbReference type="InterPro" id="IPR013785">
    <property type="entry name" value="Aldolase_TIM"/>
</dbReference>
<dbReference type="InterPro" id="IPR000891">
    <property type="entry name" value="PYR_CT"/>
</dbReference>
<dbReference type="PANTHER" id="PTHR42880">
    <property type="entry name" value="HOMOCITRATE SYNTHASE"/>
    <property type="match status" value="1"/>
</dbReference>
<dbReference type="PANTHER" id="PTHR42880:SF1">
    <property type="entry name" value="ISOPROPYLMALATE_HOMOCITRATE_CITRAMALATE SYNTHASE FAMILY PROTEIN"/>
    <property type="match status" value="1"/>
</dbReference>
<dbReference type="Pfam" id="PF00682">
    <property type="entry name" value="HMGL-like"/>
    <property type="match status" value="1"/>
</dbReference>
<dbReference type="SUPFAM" id="SSF51569">
    <property type="entry name" value="Aldolase"/>
    <property type="match status" value="1"/>
</dbReference>
<dbReference type="PROSITE" id="PS50991">
    <property type="entry name" value="PYR_CT"/>
    <property type="match status" value="1"/>
</dbReference>
<accession>Q9LCB4</accession>
<accession>A0A0M3N086</accession>
<protein>
    <recommendedName>
        <fullName evidence="5">2-phosphinomethylmalate synthase</fullName>
        <shortName evidence="5">PMS</shortName>
        <ecNumber evidence="2 3">2.3.3.18</ecNumber>
    </recommendedName>
    <alternativeName>
        <fullName evidence="4">PMM synthase</fullName>
    </alternativeName>
</protein>
<sequence>MTVQNPQEPEYFPEVFPQDAFPQYAWDEGMRPITLPHEVWLSETTHRDGQQGGLPLSLDTSRRIYDILCEITGDSTAIRHAEFFPYRDSDRNALIYALERHRDGAPIEPTTWIRARREDVELIKRIGVIETGLLSSSSDYHTFHKFGSGGRTQAASMYLDAVTMALDHGIRPRVHLEDTTRSSPDFVRALVEEVLKTAERYPAELQPRFRVCDTLGIGLPYDDVSLPRSIPRWIRLLRGFGLSPSQIELHPHNDTWLVVANCLAAIREGCGVISGTTLGTGERTGNAPLEAVMVHLLGMGYWSGARVNLPAVNKLVELYEGIGAGPSQKYPFFGRDAYVTRAGIHADGLNKFWWMYAPFNAPLLTGRELDVALTKDSGQAGLLFVLNKRLGLQLEKGDPRVAEVLAWMDRQWDAGRVSAVEWSELEPVVEKAFATEEGVG</sequence>